<proteinExistence type="inferred from homology"/>
<protein>
    <recommendedName>
        <fullName evidence="1">Cation/acetate symporter ActP</fullName>
    </recommendedName>
    <alternativeName>
        <fullName evidence="1">Acetate permease</fullName>
    </alternativeName>
    <alternativeName>
        <fullName evidence="1">Acetate transporter ActP</fullName>
    </alternativeName>
</protein>
<dbReference type="EMBL" id="CU928160">
    <property type="protein sequence ID" value="CAR01047.1"/>
    <property type="molecule type" value="Genomic_DNA"/>
</dbReference>
<dbReference type="RefSeq" id="WP_000832572.1">
    <property type="nucleotide sequence ID" value="NC_011741.1"/>
</dbReference>
<dbReference type="SMR" id="B7M7Y0"/>
<dbReference type="GeneID" id="75204210"/>
<dbReference type="KEGG" id="ecr:ECIAI1_4300"/>
<dbReference type="HOGENOM" id="CLU_018808_8_3_6"/>
<dbReference type="GO" id="GO:0005886">
    <property type="term" value="C:plasma membrane"/>
    <property type="evidence" value="ECO:0007669"/>
    <property type="project" value="UniProtKB-SubCell"/>
</dbReference>
<dbReference type="GO" id="GO:0015123">
    <property type="term" value="F:acetate transmembrane transporter activity"/>
    <property type="evidence" value="ECO:0007669"/>
    <property type="project" value="UniProtKB-UniRule"/>
</dbReference>
<dbReference type="GO" id="GO:0043879">
    <property type="term" value="F:glycolate transmembrane transporter activity"/>
    <property type="evidence" value="ECO:0007669"/>
    <property type="project" value="InterPro"/>
</dbReference>
<dbReference type="GO" id="GO:0015293">
    <property type="term" value="F:symporter activity"/>
    <property type="evidence" value="ECO:0007669"/>
    <property type="project" value="UniProtKB-KW"/>
</dbReference>
<dbReference type="GO" id="GO:0006847">
    <property type="term" value="P:plasma membrane acetate transport"/>
    <property type="evidence" value="ECO:0007669"/>
    <property type="project" value="TreeGrafter"/>
</dbReference>
<dbReference type="GO" id="GO:0006814">
    <property type="term" value="P:sodium ion transport"/>
    <property type="evidence" value="ECO:0007669"/>
    <property type="project" value="UniProtKB-KW"/>
</dbReference>
<dbReference type="CDD" id="cd11480">
    <property type="entry name" value="SLC5sbd_u4"/>
    <property type="match status" value="1"/>
</dbReference>
<dbReference type="FunFam" id="1.20.1730.10:FF:000001">
    <property type="entry name" value="Cation/acetate symporter ActP"/>
    <property type="match status" value="1"/>
</dbReference>
<dbReference type="Gene3D" id="1.20.1730.10">
    <property type="entry name" value="Sodium/glucose cotransporter"/>
    <property type="match status" value="1"/>
</dbReference>
<dbReference type="HAMAP" id="MF_01426">
    <property type="entry name" value="Acet_symport_ActP"/>
    <property type="match status" value="1"/>
</dbReference>
<dbReference type="InterPro" id="IPR014083">
    <property type="entry name" value="Cation/Ac_symporter_ActP"/>
</dbReference>
<dbReference type="InterPro" id="IPR038377">
    <property type="entry name" value="Na/Glc_symporter_sf"/>
</dbReference>
<dbReference type="InterPro" id="IPR001734">
    <property type="entry name" value="Na/solute_symporter"/>
</dbReference>
<dbReference type="InterPro" id="IPR018212">
    <property type="entry name" value="Na/solute_symporter_CS"/>
</dbReference>
<dbReference type="InterPro" id="IPR050277">
    <property type="entry name" value="Sodium:Solute_Symporter"/>
</dbReference>
<dbReference type="NCBIfam" id="NF006903">
    <property type="entry name" value="PRK09395.1"/>
    <property type="match status" value="1"/>
</dbReference>
<dbReference type="NCBIfam" id="NF009135">
    <property type="entry name" value="PRK12488.1"/>
    <property type="match status" value="1"/>
</dbReference>
<dbReference type="NCBIfam" id="TIGR00813">
    <property type="entry name" value="sss"/>
    <property type="match status" value="1"/>
</dbReference>
<dbReference type="NCBIfam" id="TIGR02711">
    <property type="entry name" value="symport_actP"/>
    <property type="match status" value="1"/>
</dbReference>
<dbReference type="PANTHER" id="PTHR48086:SF6">
    <property type="entry name" value="CATION_ACETATE SYMPORTER ACTP"/>
    <property type="match status" value="1"/>
</dbReference>
<dbReference type="PANTHER" id="PTHR48086">
    <property type="entry name" value="SODIUM/PROLINE SYMPORTER-RELATED"/>
    <property type="match status" value="1"/>
</dbReference>
<dbReference type="Pfam" id="PF00474">
    <property type="entry name" value="SSF"/>
    <property type="match status" value="1"/>
</dbReference>
<dbReference type="PROSITE" id="PS00456">
    <property type="entry name" value="NA_SOLUT_SYMP_1"/>
    <property type="match status" value="1"/>
</dbReference>
<dbReference type="PROSITE" id="PS00457">
    <property type="entry name" value="NA_SOLUT_SYMP_2"/>
    <property type="match status" value="1"/>
</dbReference>
<dbReference type="PROSITE" id="PS50283">
    <property type="entry name" value="NA_SOLUT_SYMP_3"/>
    <property type="match status" value="1"/>
</dbReference>
<reference key="1">
    <citation type="journal article" date="2009" name="PLoS Genet.">
        <title>Organised genome dynamics in the Escherichia coli species results in highly diverse adaptive paths.</title>
        <authorList>
            <person name="Touchon M."/>
            <person name="Hoede C."/>
            <person name="Tenaillon O."/>
            <person name="Barbe V."/>
            <person name="Baeriswyl S."/>
            <person name="Bidet P."/>
            <person name="Bingen E."/>
            <person name="Bonacorsi S."/>
            <person name="Bouchier C."/>
            <person name="Bouvet O."/>
            <person name="Calteau A."/>
            <person name="Chiapello H."/>
            <person name="Clermont O."/>
            <person name="Cruveiller S."/>
            <person name="Danchin A."/>
            <person name="Diard M."/>
            <person name="Dossat C."/>
            <person name="Karoui M.E."/>
            <person name="Frapy E."/>
            <person name="Garry L."/>
            <person name="Ghigo J.M."/>
            <person name="Gilles A.M."/>
            <person name="Johnson J."/>
            <person name="Le Bouguenec C."/>
            <person name="Lescat M."/>
            <person name="Mangenot S."/>
            <person name="Martinez-Jehanne V."/>
            <person name="Matic I."/>
            <person name="Nassif X."/>
            <person name="Oztas S."/>
            <person name="Petit M.A."/>
            <person name="Pichon C."/>
            <person name="Rouy Z."/>
            <person name="Ruf C.S."/>
            <person name="Schneider D."/>
            <person name="Tourret J."/>
            <person name="Vacherie B."/>
            <person name="Vallenet D."/>
            <person name="Medigue C."/>
            <person name="Rocha E.P.C."/>
            <person name="Denamur E."/>
        </authorList>
    </citation>
    <scope>NUCLEOTIDE SEQUENCE [LARGE SCALE GENOMIC DNA]</scope>
    <source>
        <strain>IAI1</strain>
    </source>
</reference>
<gene>
    <name evidence="1" type="primary">actP</name>
    <name type="ordered locus">ECIAI1_4300</name>
</gene>
<comment type="function">
    <text evidence="1">Transports acetate.</text>
</comment>
<comment type="subcellular location">
    <subcellularLocation>
        <location evidence="1">Cell inner membrane</location>
        <topology evidence="1">Multi-pass membrane protein</topology>
    </subcellularLocation>
</comment>
<comment type="similarity">
    <text evidence="1">Belongs to the sodium:solute symporter (SSF) (TC 2.A.21) family.</text>
</comment>
<name>ACTP_ECO8A</name>
<accession>B7M7Y0</accession>
<organism>
    <name type="scientific">Escherichia coli O8 (strain IAI1)</name>
    <dbReference type="NCBI Taxonomy" id="585034"/>
    <lineage>
        <taxon>Bacteria</taxon>
        <taxon>Pseudomonadati</taxon>
        <taxon>Pseudomonadota</taxon>
        <taxon>Gammaproteobacteria</taxon>
        <taxon>Enterobacterales</taxon>
        <taxon>Enterobacteriaceae</taxon>
        <taxon>Escherichia</taxon>
    </lineage>
</organism>
<feature type="chain" id="PRO_1000145714" description="Cation/acetate symporter ActP">
    <location>
        <begin position="1"/>
        <end position="549"/>
    </location>
</feature>
<feature type="transmembrane region" description="Helical" evidence="1">
    <location>
        <begin position="33"/>
        <end position="53"/>
    </location>
</feature>
<feature type="transmembrane region" description="Helical" evidence="1">
    <location>
        <begin position="77"/>
        <end position="97"/>
    </location>
</feature>
<feature type="transmembrane region" description="Helical" evidence="1">
    <location>
        <begin position="103"/>
        <end position="123"/>
    </location>
</feature>
<feature type="transmembrane region" description="Helical" evidence="1">
    <location>
        <begin position="148"/>
        <end position="168"/>
    </location>
</feature>
<feature type="transmembrane region" description="Helical" evidence="1">
    <location>
        <begin position="183"/>
        <end position="203"/>
    </location>
</feature>
<feature type="transmembrane region" description="Helical" evidence="1">
    <location>
        <begin position="206"/>
        <end position="226"/>
    </location>
</feature>
<feature type="transmembrane region" description="Helical" evidence="1">
    <location>
        <begin position="262"/>
        <end position="282"/>
    </location>
</feature>
<feature type="transmembrane region" description="Helical" evidence="1">
    <location>
        <begin position="303"/>
        <end position="323"/>
    </location>
</feature>
<feature type="transmembrane region" description="Helical" evidence="1">
    <location>
        <begin position="355"/>
        <end position="375"/>
    </location>
</feature>
<feature type="transmembrane region" description="Helical" evidence="1">
    <location>
        <begin position="404"/>
        <end position="424"/>
    </location>
</feature>
<feature type="transmembrane region" description="Helical" evidence="1">
    <location>
        <begin position="428"/>
        <end position="448"/>
    </location>
</feature>
<feature type="transmembrane region" description="Helical" evidence="1">
    <location>
        <begin position="464"/>
        <end position="484"/>
    </location>
</feature>
<feature type="transmembrane region" description="Helical" evidence="1">
    <location>
        <begin position="493"/>
        <end position="513"/>
    </location>
</feature>
<evidence type="ECO:0000255" key="1">
    <source>
        <dbReference type="HAMAP-Rule" id="MF_01426"/>
    </source>
</evidence>
<keyword id="KW-0997">Cell inner membrane</keyword>
<keyword id="KW-1003">Cell membrane</keyword>
<keyword id="KW-0406">Ion transport</keyword>
<keyword id="KW-0472">Membrane</keyword>
<keyword id="KW-0915">Sodium</keyword>
<keyword id="KW-0739">Sodium transport</keyword>
<keyword id="KW-0769">Symport</keyword>
<keyword id="KW-0812">Transmembrane</keyword>
<keyword id="KW-1133">Transmembrane helix</keyword>
<keyword id="KW-0813">Transport</keyword>
<sequence>MKRVLTALAATLPFAANAADAISGAVERQPTNWQAIIMFLIFVVFTLGITYWASKRVRSRSDYYTAGGNITGFQNGLAIAGDYMSAASFLGISALVFTSGYDGLIYSLGFLVGWPIILFLIAERLRNLGRYTFADVASYRLKQGPIRILSACGSLVVVALYLIAQMVGAGKLIELLFGLNYHIAVVLVGVLMMMYVLFGGMLATTWVQIIKAVLLLFGASFMAFMVMKHVGFSFNNLFSEAMAVHPKGVDIMKPGGLVKDPISALSLGLGLMFGTAGLPHILMRFFTVSDAREARKSVFYATGFMGYFYILTFIIGFGAIMLVGANPEYKDAAGHLIGGNNMAAVHLANAVGGNLFLGFISAVAFATILAVVAGLTLAGASAVSHDLYANVFKKGATEREELRVSKITVLILGVIAIILGVLFENQNIAFMVGLAFAIAASCNFPIILLSMYWSKLTTRGAMMGGWLGLITAVVLMILGPTIWVQILGHEKAIFPYEYPALFSISVAFLGIWFFSATDNSAEGARERELFRAQFIRSQTGFGVEQGRAH</sequence>